<dbReference type="EC" id="5.99.-.-" evidence="1"/>
<dbReference type="EMBL" id="AL123456">
    <property type="protein sequence ID" value="CCP43561.1"/>
    <property type="molecule type" value="Genomic_DNA"/>
</dbReference>
<dbReference type="PIR" id="E70809">
    <property type="entry name" value="E70809"/>
</dbReference>
<dbReference type="RefSeq" id="NP_215328.1">
    <property type="nucleotide sequence ID" value="NC_000962.3"/>
</dbReference>
<dbReference type="RefSeq" id="WP_003898596.1">
    <property type="nucleotide sequence ID" value="NZ_NVQJ01000064.1"/>
</dbReference>
<dbReference type="PDB" id="2FWV">
    <property type="method" value="X-ray"/>
    <property type="resolution" value="1.70 A"/>
    <property type="chains" value="A=1-226"/>
</dbReference>
<dbReference type="PDBsum" id="2FWV"/>
<dbReference type="SMR" id="P9WFG9"/>
<dbReference type="STRING" id="83332.Rv0813c"/>
<dbReference type="iPTMnet" id="P9WFG9"/>
<dbReference type="PaxDb" id="83332-Rv0813c"/>
<dbReference type="DNASU" id="885395"/>
<dbReference type="GeneID" id="885395"/>
<dbReference type="KEGG" id="mtu:Rv0813c"/>
<dbReference type="KEGG" id="mtv:RVBD_0813c"/>
<dbReference type="TubercuList" id="Rv0813c"/>
<dbReference type="eggNOG" id="COG4044">
    <property type="taxonomic scope" value="Bacteria"/>
</dbReference>
<dbReference type="InParanoid" id="P9WFG9"/>
<dbReference type="OrthoDB" id="4804006at2"/>
<dbReference type="PhylomeDB" id="P9WFG9"/>
<dbReference type="EvolutionaryTrace" id="P9WFG9"/>
<dbReference type="Proteomes" id="UP000001584">
    <property type="component" value="Chromosome"/>
</dbReference>
<dbReference type="GO" id="GO:0005886">
    <property type="term" value="C:plasma membrane"/>
    <property type="evidence" value="ECO:0007005"/>
    <property type="project" value="MTBBASE"/>
</dbReference>
<dbReference type="GO" id="GO:0020037">
    <property type="term" value="F:heme binding"/>
    <property type="evidence" value="ECO:0007669"/>
    <property type="project" value="UniProtKB-UniRule"/>
</dbReference>
<dbReference type="GO" id="GO:0046872">
    <property type="term" value="F:metal ion binding"/>
    <property type="evidence" value="ECO:0007669"/>
    <property type="project" value="UniProtKB-KW"/>
</dbReference>
<dbReference type="GO" id="GO:0062213">
    <property type="term" value="F:peroxynitrite isomerase activity"/>
    <property type="evidence" value="ECO:0007669"/>
    <property type="project" value="UniProtKB-UniRule"/>
</dbReference>
<dbReference type="CDD" id="cd07828">
    <property type="entry name" value="lipocalin_heme-bd-THAP4-like"/>
    <property type="match status" value="1"/>
</dbReference>
<dbReference type="FunFam" id="2.40.128.20:FF:000025">
    <property type="entry name" value="UPF0678 fatty acid-binding protein-like protein Rv0813c"/>
    <property type="match status" value="1"/>
</dbReference>
<dbReference type="Gene3D" id="2.40.128.20">
    <property type="match status" value="1"/>
</dbReference>
<dbReference type="HAMAP" id="MF_01297">
    <property type="entry name" value="nitrobindin"/>
    <property type="match status" value="1"/>
</dbReference>
<dbReference type="InterPro" id="IPR012674">
    <property type="entry name" value="Calycin"/>
</dbReference>
<dbReference type="InterPro" id="IPR022939">
    <property type="entry name" value="Nb(III)_bact/plant"/>
</dbReference>
<dbReference type="InterPro" id="IPR045165">
    <property type="entry name" value="Nitrobindin"/>
</dbReference>
<dbReference type="InterPro" id="IPR014878">
    <property type="entry name" value="THAP4-like_heme-bd"/>
</dbReference>
<dbReference type="PANTHER" id="PTHR15854:SF4">
    <property type="entry name" value="PEROXYNITRITE ISOMERASE THAP4"/>
    <property type="match status" value="1"/>
</dbReference>
<dbReference type="PANTHER" id="PTHR15854">
    <property type="entry name" value="THAP4 PROTEIN"/>
    <property type="match status" value="1"/>
</dbReference>
<dbReference type="Pfam" id="PF08768">
    <property type="entry name" value="THAP4_heme-bd"/>
    <property type="match status" value="1"/>
</dbReference>
<dbReference type="SUPFAM" id="SSF50814">
    <property type="entry name" value="Lipocalins"/>
    <property type="match status" value="1"/>
</dbReference>
<reference key="1">
    <citation type="journal article" date="1998" name="Nature">
        <title>Deciphering the biology of Mycobacterium tuberculosis from the complete genome sequence.</title>
        <authorList>
            <person name="Cole S.T."/>
            <person name="Brosch R."/>
            <person name="Parkhill J."/>
            <person name="Garnier T."/>
            <person name="Churcher C.M."/>
            <person name="Harris D.E."/>
            <person name="Gordon S.V."/>
            <person name="Eiglmeier K."/>
            <person name="Gas S."/>
            <person name="Barry C.E. III"/>
            <person name="Tekaia F."/>
            <person name="Badcock K."/>
            <person name="Basham D."/>
            <person name="Brown D."/>
            <person name="Chillingworth T."/>
            <person name="Connor R."/>
            <person name="Davies R.M."/>
            <person name="Devlin K."/>
            <person name="Feltwell T."/>
            <person name="Gentles S."/>
            <person name="Hamlin N."/>
            <person name="Holroyd S."/>
            <person name="Hornsby T."/>
            <person name="Jagels K."/>
            <person name="Krogh A."/>
            <person name="McLean J."/>
            <person name="Moule S."/>
            <person name="Murphy L.D."/>
            <person name="Oliver S."/>
            <person name="Osborne J."/>
            <person name="Quail M.A."/>
            <person name="Rajandream M.A."/>
            <person name="Rogers J."/>
            <person name="Rutter S."/>
            <person name="Seeger K."/>
            <person name="Skelton S."/>
            <person name="Squares S."/>
            <person name="Squares R."/>
            <person name="Sulston J.E."/>
            <person name="Taylor K."/>
            <person name="Whitehead S."/>
            <person name="Barrell B.G."/>
        </authorList>
    </citation>
    <scope>NUCLEOTIDE SEQUENCE [LARGE SCALE GENOMIC DNA]</scope>
    <source>
        <strain>ATCC 25618 / H37Rv</strain>
    </source>
</reference>
<reference key="2">
    <citation type="journal article" date="2002" name="Microbiology">
        <title>Re-annotation of the genome sequence of Mycobacterium tuberculosis H37Rv.</title>
        <authorList>
            <person name="Camus J.-C."/>
            <person name="Pryor M.J."/>
            <person name="Medigue C."/>
            <person name="Cole S.T."/>
        </authorList>
    </citation>
    <scope>IDENTIFICATION</scope>
    <source>
        <strain>ATCC 25618 / H37Rv</strain>
    </source>
</reference>
<reference key="3">
    <citation type="journal article" date="2008" name="BMC Syst. Biol.">
        <title>targetTB: a target identification pipeline for Mycobacterium tuberculosis through an interactome, reactome and genome-scale structural analysis.</title>
        <authorList>
            <person name="Raman K."/>
            <person name="Yeturu K."/>
            <person name="Chandra N."/>
        </authorList>
    </citation>
    <scope>IDENTIFICATION AS A DRUG TARGET [LARGE SCALE ANALYSIS]</scope>
</reference>
<reference key="4">
    <citation type="journal article" date="2011" name="Mol. Cell. Proteomics">
        <title>Proteogenomic analysis of Mycobacterium tuberculosis by high resolution mass spectrometry.</title>
        <authorList>
            <person name="Kelkar D.S."/>
            <person name="Kumar D."/>
            <person name="Kumar P."/>
            <person name="Balakrishnan L."/>
            <person name="Muthusamy B."/>
            <person name="Yadav A.K."/>
            <person name="Shrivastava P."/>
            <person name="Marimuthu A."/>
            <person name="Anand S."/>
            <person name="Sundaram H."/>
            <person name="Kingsbury R."/>
            <person name="Harsha H.C."/>
            <person name="Nair B."/>
            <person name="Prasad T.S."/>
            <person name="Chauhan D.S."/>
            <person name="Katoch K."/>
            <person name="Katoch V.M."/>
            <person name="Kumar P."/>
            <person name="Chaerkady R."/>
            <person name="Ramachandran S."/>
            <person name="Dash D."/>
            <person name="Pandey A."/>
        </authorList>
    </citation>
    <scope>ACETYLATION [LARGE SCALE ANALYSIS] AT SER-2</scope>
    <scope>CLEAVAGE OF INITIATOR METHIONINE [LARGE SCALE ANALYSIS]</scope>
    <scope>IDENTIFICATION BY MASS SPECTROMETRY [LARGE SCALE ANALYSIS]</scope>
    <source>
        <strain>ATCC 25618 / H37Rv</strain>
    </source>
</reference>
<reference key="5">
    <citation type="journal article" date="2007" name="J. Bacteriol.">
        <title>The crystal structure of Rv0813c from Mycobacterium tuberculosis reveals a new family of fatty acid-binding protein-like proteins in bacteria.</title>
        <authorList>
            <person name="Shepard W."/>
            <person name="Haouz A."/>
            <person name="Grana M."/>
            <person name="Buschiazzo A."/>
            <person name="Betton J.-M."/>
            <person name="Cole S.T."/>
            <person name="Alzari P.M."/>
        </authorList>
    </citation>
    <scope>X-RAY CRYSTALLOGRAPHY (1.7 ANGSTROMS)</scope>
    <scope>SUBUNIT</scope>
    <source>
        <strain>ATCC 25618 / H37Rv</strain>
    </source>
</reference>
<comment type="function">
    <text evidence="1">Heme-binding protein able to scavenge peroxynitrite and to protect free L-tyrosine against peroxynitrite-mediated nitration, by acting as a peroxynitrite isomerase that converts peroxynitrite to nitrate. Therefore, this protein likely plays a role in peroxynitrite sensing and in the detoxification of reactive nitrogen and oxygen species (RNS and ROS, respectively). Is able to bind nitric oxide (NO) in vitro, but may act as a sensor of peroxynitrite levels in vivo.</text>
</comment>
<comment type="catalytic activity">
    <reaction evidence="1">
        <text>peroxynitrite = nitrate</text>
        <dbReference type="Rhea" id="RHEA:63116"/>
        <dbReference type="ChEBI" id="CHEBI:17632"/>
        <dbReference type="ChEBI" id="CHEBI:25941"/>
    </reaction>
    <physiologicalReaction direction="left-to-right" evidence="1">
        <dbReference type="Rhea" id="RHEA:63117"/>
    </physiologicalReaction>
</comment>
<comment type="cofactor">
    <cofactor evidence="1">
        <name>heme b</name>
        <dbReference type="ChEBI" id="CHEBI:60344"/>
    </cofactor>
    <text evidence="1">Binds 1 heme b group per subunit, that coordinates a highly solvent-exposed Fe(III) atom.</text>
</comment>
<comment type="pathway">
    <text evidence="1">Nitrogen metabolism.</text>
</comment>
<comment type="subunit">
    <text evidence="2">Homodimer.</text>
</comment>
<comment type="domain">
    <text evidence="1">Forms a 10-stranded antiparallel beta-barrel structure able to accommodate a hydrophobic ligand in its interior. In fact, this fold hosts the heme group, which is located in a wide surface cleft.</text>
</comment>
<comment type="miscellaneous">
    <text>Was identified as a high-confidence drug target.</text>
</comment>
<comment type="similarity">
    <text evidence="1">Belongs to the nitrobindin family.</text>
</comment>
<keyword id="KW-0002">3D-structure</keyword>
<keyword id="KW-0007">Acetylation</keyword>
<keyword id="KW-0349">Heme</keyword>
<keyword id="KW-0408">Iron</keyword>
<keyword id="KW-0413">Isomerase</keyword>
<keyword id="KW-0479">Metal-binding</keyword>
<keyword id="KW-1185">Reference proteome</keyword>
<proteinExistence type="evidence at protein level"/>
<evidence type="ECO:0000255" key="1">
    <source>
        <dbReference type="HAMAP-Rule" id="MF_01297"/>
    </source>
</evidence>
<evidence type="ECO:0000269" key="2">
    <source>
    </source>
</evidence>
<evidence type="ECO:0007744" key="3">
    <source>
    </source>
</evidence>
<evidence type="ECO:0007829" key="4">
    <source>
        <dbReference type="PDB" id="2FWV"/>
    </source>
</evidence>
<organism>
    <name type="scientific">Mycobacterium tuberculosis (strain ATCC 25618 / H37Rv)</name>
    <dbReference type="NCBI Taxonomy" id="83332"/>
    <lineage>
        <taxon>Bacteria</taxon>
        <taxon>Bacillati</taxon>
        <taxon>Actinomycetota</taxon>
        <taxon>Actinomycetes</taxon>
        <taxon>Mycobacteriales</taxon>
        <taxon>Mycobacteriaceae</taxon>
        <taxon>Mycobacterium</taxon>
        <taxon>Mycobacterium tuberculosis complex</taxon>
    </lineage>
</organism>
<accession>P9WFG9</accession>
<accession>L0T4Z5</accession>
<accession>O53827</accession>
<accession>Q7D987</accession>
<feature type="initiator methionine" description="Removed" evidence="3">
    <location>
        <position position="1"/>
    </location>
</feature>
<feature type="chain" id="PRO_0000356933" description="Peroxynitrite isomerase 2">
    <location>
        <begin position="2"/>
        <end position="226"/>
    </location>
</feature>
<feature type="short sequence motif" description="GXWXGXG">
    <location>
        <begin position="73"/>
        <end position="79"/>
    </location>
</feature>
<feature type="binding site" evidence="1">
    <location>
        <position position="189"/>
    </location>
    <ligand>
        <name>heme b</name>
        <dbReference type="ChEBI" id="CHEBI:60344"/>
    </ligand>
</feature>
<feature type="binding site" description="axial binding residue" evidence="1">
    <location>
        <position position="216"/>
    </location>
    <ligand>
        <name>heme b</name>
        <dbReference type="ChEBI" id="CHEBI:60344"/>
    </ligand>
    <ligandPart>
        <name>Fe</name>
        <dbReference type="ChEBI" id="CHEBI:18248"/>
    </ligandPart>
</feature>
<feature type="modified residue" description="N-acetylserine" evidence="3">
    <location>
        <position position="2"/>
    </location>
</feature>
<feature type="helix" evidence="4">
    <location>
        <begin position="28"/>
        <end position="36"/>
    </location>
</feature>
<feature type="strand" evidence="4">
    <location>
        <begin position="46"/>
        <end position="48"/>
    </location>
</feature>
<feature type="strand" evidence="4">
    <location>
        <begin position="57"/>
        <end position="59"/>
    </location>
</feature>
<feature type="helix" evidence="4">
    <location>
        <begin position="63"/>
        <end position="71"/>
    </location>
</feature>
<feature type="strand" evidence="4">
    <location>
        <begin position="73"/>
        <end position="83"/>
    </location>
</feature>
<feature type="strand" evidence="4">
    <location>
        <begin position="86"/>
        <end position="98"/>
    </location>
</feature>
<feature type="strand" evidence="4">
    <location>
        <begin position="100"/>
        <end position="113"/>
    </location>
</feature>
<feature type="strand" evidence="4">
    <location>
        <begin position="119"/>
        <end position="132"/>
    </location>
</feature>
<feature type="strand" evidence="4">
    <location>
        <begin position="145"/>
        <end position="151"/>
    </location>
</feature>
<feature type="turn" evidence="4">
    <location>
        <begin position="152"/>
        <end position="154"/>
    </location>
</feature>
<feature type="strand" evidence="4">
    <location>
        <begin position="155"/>
        <end position="165"/>
    </location>
</feature>
<feature type="strand" evidence="4">
    <location>
        <begin position="168"/>
        <end position="178"/>
    </location>
</feature>
<feature type="strand" evidence="4">
    <location>
        <begin position="188"/>
        <end position="194"/>
    </location>
</feature>
<feature type="strand" evidence="4">
    <location>
        <begin position="200"/>
        <end position="207"/>
    </location>
</feature>
<feature type="strand" evidence="4">
    <location>
        <begin position="213"/>
        <end position="225"/>
    </location>
</feature>
<gene>
    <name type="ordered locus">Rv0813c</name>
</gene>
<name>NB2_MYCTU</name>
<sequence>MSSGAGSDATGAGGVHAAGSGDRAVAAAVERAKATAARNIPAFDDLPVPADTANLREGADLNNALLALLPLVGVWRGEGEGRGPDGDYRFGQQIVVSHDGGDYLNWESRSWRLTATGDYQEPGLREAGFWRFVADPYDPSESQAIELLLAHSAGYVELFYGRPRTQSSWELVTDALARSRSGVLVGGAKRLYGIVEGGDLAYVEERVDADGGLVPHLSARLSRFVG</sequence>
<protein>
    <recommendedName>
        <fullName>Peroxynitrite isomerase 2</fullName>
        <ecNumber evidence="1">5.99.-.-</ecNumber>
    </recommendedName>
    <alternativeName>
        <fullName>Ferric nitrobindin</fullName>
        <shortName>Nb(III)</shortName>
    </alternativeName>
</protein>